<feature type="chain" id="PRO_1000044756" description="UPF0251 protein Sputw3181_3483">
    <location>
        <begin position="1"/>
        <end position="98"/>
    </location>
</feature>
<dbReference type="EMBL" id="CP000503">
    <property type="protein sequence ID" value="ABM26295.1"/>
    <property type="molecule type" value="Genomic_DNA"/>
</dbReference>
<dbReference type="RefSeq" id="WP_011790732.1">
    <property type="nucleotide sequence ID" value="NC_008750.1"/>
</dbReference>
<dbReference type="SMR" id="A1RNQ0"/>
<dbReference type="KEGG" id="shw:Sputw3181_3483"/>
<dbReference type="HOGENOM" id="CLU_094511_2_1_6"/>
<dbReference type="Proteomes" id="UP000002597">
    <property type="component" value="Chromosome"/>
</dbReference>
<dbReference type="Gene3D" id="1.10.10.10">
    <property type="entry name" value="Winged helix-like DNA-binding domain superfamily/Winged helix DNA-binding domain"/>
    <property type="match status" value="1"/>
</dbReference>
<dbReference type="HAMAP" id="MF_00674">
    <property type="entry name" value="UPF0251"/>
    <property type="match status" value="1"/>
</dbReference>
<dbReference type="InterPro" id="IPR002852">
    <property type="entry name" value="UPF0251"/>
</dbReference>
<dbReference type="InterPro" id="IPR036388">
    <property type="entry name" value="WH-like_DNA-bd_sf"/>
</dbReference>
<dbReference type="PANTHER" id="PTHR37478">
    <property type="match status" value="1"/>
</dbReference>
<dbReference type="PANTHER" id="PTHR37478:SF2">
    <property type="entry name" value="UPF0251 PROTEIN TK0562"/>
    <property type="match status" value="1"/>
</dbReference>
<dbReference type="Pfam" id="PF02001">
    <property type="entry name" value="DUF134"/>
    <property type="match status" value="1"/>
</dbReference>
<protein>
    <recommendedName>
        <fullName evidence="1">UPF0251 protein Sputw3181_3483</fullName>
    </recommendedName>
</protein>
<sequence length="98" mass="10702">MARPKKCRQLSSCVPCSLFKPNGIPSVELTHIQLEADEFEALELGDVQRLSQLDAAALMGISRQTFGYLLASARKKVATAITQGEVLRLPSKTDKDLS</sequence>
<name>Y3483_SHESW</name>
<reference key="1">
    <citation type="submission" date="2006-12" db="EMBL/GenBank/DDBJ databases">
        <title>Complete sequence of Shewanella sp. W3-18-1.</title>
        <authorList>
            <consortium name="US DOE Joint Genome Institute"/>
            <person name="Copeland A."/>
            <person name="Lucas S."/>
            <person name="Lapidus A."/>
            <person name="Barry K."/>
            <person name="Detter J.C."/>
            <person name="Glavina del Rio T."/>
            <person name="Hammon N."/>
            <person name="Israni S."/>
            <person name="Dalin E."/>
            <person name="Tice H."/>
            <person name="Pitluck S."/>
            <person name="Chain P."/>
            <person name="Malfatti S."/>
            <person name="Shin M."/>
            <person name="Vergez L."/>
            <person name="Schmutz J."/>
            <person name="Larimer F."/>
            <person name="Land M."/>
            <person name="Hauser L."/>
            <person name="Kyrpides N."/>
            <person name="Lykidis A."/>
            <person name="Tiedje J."/>
            <person name="Richardson P."/>
        </authorList>
    </citation>
    <scope>NUCLEOTIDE SEQUENCE [LARGE SCALE GENOMIC DNA]</scope>
    <source>
        <strain>W3-18-1</strain>
    </source>
</reference>
<evidence type="ECO:0000255" key="1">
    <source>
        <dbReference type="HAMAP-Rule" id="MF_00674"/>
    </source>
</evidence>
<gene>
    <name type="ordered locus">Sputw3181_3483</name>
</gene>
<proteinExistence type="inferred from homology"/>
<comment type="similarity">
    <text evidence="1">Belongs to the UPF0251 family.</text>
</comment>
<accession>A1RNQ0</accession>
<organism>
    <name type="scientific">Shewanella sp. (strain W3-18-1)</name>
    <dbReference type="NCBI Taxonomy" id="351745"/>
    <lineage>
        <taxon>Bacteria</taxon>
        <taxon>Pseudomonadati</taxon>
        <taxon>Pseudomonadota</taxon>
        <taxon>Gammaproteobacteria</taxon>
        <taxon>Alteromonadales</taxon>
        <taxon>Shewanellaceae</taxon>
        <taxon>Shewanella</taxon>
    </lineage>
</organism>